<accession>Q0TJS3</accession>
<feature type="chain" id="PRO_0000381367" description="Biotin synthase">
    <location>
        <begin position="1"/>
        <end position="346"/>
    </location>
</feature>
<feature type="domain" description="Radical SAM core" evidence="2">
    <location>
        <begin position="38"/>
        <end position="256"/>
    </location>
</feature>
<feature type="binding site" evidence="1">
    <location>
        <position position="53"/>
    </location>
    <ligand>
        <name>[4Fe-4S] cluster</name>
        <dbReference type="ChEBI" id="CHEBI:49883"/>
        <note>4Fe-4S-S-AdoMet</note>
    </ligand>
</feature>
<feature type="binding site" evidence="1">
    <location>
        <position position="57"/>
    </location>
    <ligand>
        <name>[4Fe-4S] cluster</name>
        <dbReference type="ChEBI" id="CHEBI:49883"/>
        <note>4Fe-4S-S-AdoMet</note>
    </ligand>
</feature>
<feature type="binding site" evidence="1">
    <location>
        <position position="60"/>
    </location>
    <ligand>
        <name>[4Fe-4S] cluster</name>
        <dbReference type="ChEBI" id="CHEBI:49883"/>
        <note>4Fe-4S-S-AdoMet</note>
    </ligand>
</feature>
<feature type="binding site" evidence="1">
    <location>
        <position position="97"/>
    </location>
    <ligand>
        <name>[2Fe-2S] cluster</name>
        <dbReference type="ChEBI" id="CHEBI:190135"/>
    </ligand>
</feature>
<feature type="binding site" evidence="1">
    <location>
        <position position="128"/>
    </location>
    <ligand>
        <name>[2Fe-2S] cluster</name>
        <dbReference type="ChEBI" id="CHEBI:190135"/>
    </ligand>
</feature>
<feature type="binding site" evidence="1">
    <location>
        <position position="188"/>
    </location>
    <ligand>
        <name>[2Fe-2S] cluster</name>
        <dbReference type="ChEBI" id="CHEBI:190135"/>
    </ligand>
</feature>
<feature type="binding site" evidence="1">
    <location>
        <position position="260"/>
    </location>
    <ligand>
        <name>[2Fe-2S] cluster</name>
        <dbReference type="ChEBI" id="CHEBI:190135"/>
    </ligand>
</feature>
<comment type="function">
    <text evidence="1">Catalyzes the conversion of dethiobiotin (DTB) to biotin by the insertion of a sulfur atom into dethiobiotin via a radical-based mechanism.</text>
</comment>
<comment type="catalytic activity">
    <reaction evidence="1">
        <text>(4R,5S)-dethiobiotin + (sulfur carrier)-SH + 2 reduced [2Fe-2S]-[ferredoxin] + 2 S-adenosyl-L-methionine = (sulfur carrier)-H + biotin + 2 5'-deoxyadenosine + 2 L-methionine + 2 oxidized [2Fe-2S]-[ferredoxin]</text>
        <dbReference type="Rhea" id="RHEA:22060"/>
        <dbReference type="Rhea" id="RHEA-COMP:10000"/>
        <dbReference type="Rhea" id="RHEA-COMP:10001"/>
        <dbReference type="Rhea" id="RHEA-COMP:14737"/>
        <dbReference type="Rhea" id="RHEA-COMP:14739"/>
        <dbReference type="ChEBI" id="CHEBI:17319"/>
        <dbReference type="ChEBI" id="CHEBI:29917"/>
        <dbReference type="ChEBI" id="CHEBI:33737"/>
        <dbReference type="ChEBI" id="CHEBI:33738"/>
        <dbReference type="ChEBI" id="CHEBI:57586"/>
        <dbReference type="ChEBI" id="CHEBI:57844"/>
        <dbReference type="ChEBI" id="CHEBI:59789"/>
        <dbReference type="ChEBI" id="CHEBI:64428"/>
        <dbReference type="ChEBI" id="CHEBI:149473"/>
        <dbReference type="EC" id="2.8.1.6"/>
    </reaction>
</comment>
<comment type="cofactor">
    <cofactor evidence="1">
        <name>[4Fe-4S] cluster</name>
        <dbReference type="ChEBI" id="CHEBI:49883"/>
    </cofactor>
    <text evidence="1">Binds 1 [4Fe-4S] cluster. The cluster is coordinated with 3 cysteines and an exchangeable S-adenosyl-L-methionine.</text>
</comment>
<comment type="cofactor">
    <cofactor evidence="1">
        <name>[2Fe-2S] cluster</name>
        <dbReference type="ChEBI" id="CHEBI:190135"/>
    </cofactor>
    <text evidence="1">Binds 1 [2Fe-2S] cluster. The cluster is coordinated with 3 cysteines and 1 arginine.</text>
</comment>
<comment type="pathway">
    <text evidence="1">Cofactor biosynthesis; biotin biosynthesis; biotin from 7,8-diaminononanoate: step 2/2.</text>
</comment>
<comment type="subunit">
    <text evidence="1">Homodimer.</text>
</comment>
<comment type="similarity">
    <text evidence="1">Belongs to the radical SAM superfamily. Biotin synthase family.</text>
</comment>
<reference key="1">
    <citation type="journal article" date="2006" name="Mol. Microbiol.">
        <title>Role of pathogenicity island-associated integrases in the genome plasticity of uropathogenic Escherichia coli strain 536.</title>
        <authorList>
            <person name="Hochhut B."/>
            <person name="Wilde C."/>
            <person name="Balling G."/>
            <person name="Middendorf B."/>
            <person name="Dobrindt U."/>
            <person name="Brzuszkiewicz E."/>
            <person name="Gottschalk G."/>
            <person name="Carniel E."/>
            <person name="Hacker J."/>
        </authorList>
    </citation>
    <scope>NUCLEOTIDE SEQUENCE [LARGE SCALE GENOMIC DNA]</scope>
    <source>
        <strain>536 / UPEC</strain>
    </source>
</reference>
<name>BIOB_ECOL5</name>
<gene>
    <name evidence="1" type="primary">bioB</name>
    <name type="ordered locus">ECP_0789</name>
</gene>
<dbReference type="EC" id="2.8.1.6" evidence="1"/>
<dbReference type="EMBL" id="CP000247">
    <property type="protein sequence ID" value="ABG68808.1"/>
    <property type="molecule type" value="Genomic_DNA"/>
</dbReference>
<dbReference type="RefSeq" id="WP_000951223.1">
    <property type="nucleotide sequence ID" value="NC_008253.1"/>
</dbReference>
<dbReference type="SMR" id="Q0TJS3"/>
<dbReference type="KEGG" id="ecp:ECP_0789"/>
<dbReference type="HOGENOM" id="CLU_033172_1_2_6"/>
<dbReference type="UniPathway" id="UPA00078">
    <property type="reaction ID" value="UER00162"/>
</dbReference>
<dbReference type="Proteomes" id="UP000009182">
    <property type="component" value="Chromosome"/>
</dbReference>
<dbReference type="GO" id="GO:0051537">
    <property type="term" value="F:2 iron, 2 sulfur cluster binding"/>
    <property type="evidence" value="ECO:0007669"/>
    <property type="project" value="UniProtKB-KW"/>
</dbReference>
<dbReference type="GO" id="GO:0051539">
    <property type="term" value="F:4 iron, 4 sulfur cluster binding"/>
    <property type="evidence" value="ECO:0007669"/>
    <property type="project" value="UniProtKB-KW"/>
</dbReference>
<dbReference type="GO" id="GO:0004076">
    <property type="term" value="F:biotin synthase activity"/>
    <property type="evidence" value="ECO:0007669"/>
    <property type="project" value="UniProtKB-UniRule"/>
</dbReference>
<dbReference type="GO" id="GO:0005506">
    <property type="term" value="F:iron ion binding"/>
    <property type="evidence" value="ECO:0007669"/>
    <property type="project" value="UniProtKB-UniRule"/>
</dbReference>
<dbReference type="GO" id="GO:0009102">
    <property type="term" value="P:biotin biosynthetic process"/>
    <property type="evidence" value="ECO:0007669"/>
    <property type="project" value="UniProtKB-UniRule"/>
</dbReference>
<dbReference type="CDD" id="cd01335">
    <property type="entry name" value="Radical_SAM"/>
    <property type="match status" value="1"/>
</dbReference>
<dbReference type="FunFam" id="3.20.20.70:FF:000011">
    <property type="entry name" value="Biotin synthase"/>
    <property type="match status" value="1"/>
</dbReference>
<dbReference type="Gene3D" id="3.20.20.70">
    <property type="entry name" value="Aldolase class I"/>
    <property type="match status" value="1"/>
</dbReference>
<dbReference type="HAMAP" id="MF_01694">
    <property type="entry name" value="BioB"/>
    <property type="match status" value="1"/>
</dbReference>
<dbReference type="InterPro" id="IPR013785">
    <property type="entry name" value="Aldolase_TIM"/>
</dbReference>
<dbReference type="InterPro" id="IPR010722">
    <property type="entry name" value="BATS_dom"/>
</dbReference>
<dbReference type="InterPro" id="IPR002684">
    <property type="entry name" value="Biotin_synth/BioAB"/>
</dbReference>
<dbReference type="InterPro" id="IPR024177">
    <property type="entry name" value="Biotin_synthase"/>
</dbReference>
<dbReference type="InterPro" id="IPR006638">
    <property type="entry name" value="Elp3/MiaA/NifB-like_rSAM"/>
</dbReference>
<dbReference type="InterPro" id="IPR007197">
    <property type="entry name" value="rSAM"/>
</dbReference>
<dbReference type="NCBIfam" id="TIGR00433">
    <property type="entry name" value="bioB"/>
    <property type="match status" value="1"/>
</dbReference>
<dbReference type="PANTHER" id="PTHR22976">
    <property type="entry name" value="BIOTIN SYNTHASE"/>
    <property type="match status" value="1"/>
</dbReference>
<dbReference type="PANTHER" id="PTHR22976:SF2">
    <property type="entry name" value="BIOTIN SYNTHASE, MITOCHONDRIAL"/>
    <property type="match status" value="1"/>
</dbReference>
<dbReference type="Pfam" id="PF06968">
    <property type="entry name" value="BATS"/>
    <property type="match status" value="1"/>
</dbReference>
<dbReference type="Pfam" id="PF04055">
    <property type="entry name" value="Radical_SAM"/>
    <property type="match status" value="1"/>
</dbReference>
<dbReference type="PIRSF" id="PIRSF001619">
    <property type="entry name" value="Biotin_synth"/>
    <property type="match status" value="1"/>
</dbReference>
<dbReference type="SFLD" id="SFLDF00272">
    <property type="entry name" value="biotin_synthase"/>
    <property type="match status" value="1"/>
</dbReference>
<dbReference type="SFLD" id="SFLDS00029">
    <property type="entry name" value="Radical_SAM"/>
    <property type="match status" value="1"/>
</dbReference>
<dbReference type="SMART" id="SM00876">
    <property type="entry name" value="BATS"/>
    <property type="match status" value="1"/>
</dbReference>
<dbReference type="SMART" id="SM00729">
    <property type="entry name" value="Elp3"/>
    <property type="match status" value="1"/>
</dbReference>
<dbReference type="SUPFAM" id="SSF102114">
    <property type="entry name" value="Radical SAM enzymes"/>
    <property type="match status" value="1"/>
</dbReference>
<dbReference type="PROSITE" id="PS51918">
    <property type="entry name" value="RADICAL_SAM"/>
    <property type="match status" value="1"/>
</dbReference>
<proteinExistence type="inferred from homology"/>
<keyword id="KW-0001">2Fe-2S</keyword>
<keyword id="KW-0004">4Fe-4S</keyword>
<keyword id="KW-0093">Biotin biosynthesis</keyword>
<keyword id="KW-0408">Iron</keyword>
<keyword id="KW-0411">Iron-sulfur</keyword>
<keyword id="KW-0479">Metal-binding</keyword>
<keyword id="KW-0949">S-adenosyl-L-methionine</keyword>
<keyword id="KW-0808">Transferase</keyword>
<organism>
    <name type="scientific">Escherichia coli O6:K15:H31 (strain 536 / UPEC)</name>
    <dbReference type="NCBI Taxonomy" id="362663"/>
    <lineage>
        <taxon>Bacteria</taxon>
        <taxon>Pseudomonadati</taxon>
        <taxon>Pseudomonadota</taxon>
        <taxon>Gammaproteobacteria</taxon>
        <taxon>Enterobacterales</taxon>
        <taxon>Enterobacteriaceae</taxon>
        <taxon>Escherichia</taxon>
    </lineage>
</organism>
<protein>
    <recommendedName>
        <fullName evidence="1">Biotin synthase</fullName>
        <ecNumber evidence="1">2.8.1.6</ecNumber>
    </recommendedName>
</protein>
<evidence type="ECO:0000255" key="1">
    <source>
        <dbReference type="HAMAP-Rule" id="MF_01694"/>
    </source>
</evidence>
<evidence type="ECO:0000255" key="2">
    <source>
        <dbReference type="PROSITE-ProRule" id="PRU01266"/>
    </source>
</evidence>
<sequence>MAHRPRWTLSQVTELFEKPLLDLLFEAQQVHRQHFDPRQVQVSTLLSIKTGACPEDCKYCPQSSRYKTGLEAERLMEVEQVLESARKAKAAGSTRFCMGAAWKNPRERDMPYLEQMVQGVKAMGLEACMTLGTLSESQAQRLANAGLDYYNHNLDTSPEFYGNIITTRTYQERLDTLEKVREAGIKVCSGGIVGLGETVKDRAGLLLQLANLPTPPESVPINMLVKVKGTPLADNDDVDAFDFIRTIAVARIMMPTSYVRLSAGREQMNEQTQAMCFMAGANSIFYGCKLLTTPNPEEDKDLQLFRKLGLNPQQTAVLAGDNEQQQRLEQALMTPDTDEYYNAAAL</sequence>